<reference key="1">
    <citation type="submission" date="2007-04" db="EMBL/GenBank/DDBJ databases">
        <title>Primary expression profile analysis and novel gene discovery of Xinong Saanen dairy goat mammary gland.</title>
        <authorList>
            <person name="Han X.F."/>
            <person name="Luo J."/>
            <person name="Wu N."/>
            <person name="Matand K."/>
            <person name="Yang B.J."/>
            <person name="Wu H.J."/>
            <person name="Zhang L.J."/>
            <person name="Wang H.B."/>
            <person name="Qi Y."/>
        </authorList>
    </citation>
    <scope>NUCLEOTIDE SEQUENCE [LARGE SCALE MRNA]</scope>
    <source>
        <strain>Xinong Saanen</strain>
        <tissue>Mammary gland</tissue>
    </source>
</reference>
<sequence>MTRGNQRELARQKNMKKQSDSVKGKRRDDGLSAAARKQRDSEIMQQKQKKANEKKEEPK</sequence>
<comment type="function">
    <text evidence="1">Positive regulator of amyloid protein aggregation and proteotoxicity (By similarity). Induces conformational changes in amyloid proteins, such as HTT, driving them into compact formations preceding the formation of aggregates (By similarity).</text>
</comment>
<comment type="similarity">
    <text evidence="3">Belongs to the SERF family.</text>
</comment>
<organism>
    <name type="scientific">Capra hircus</name>
    <name type="common">Goat</name>
    <dbReference type="NCBI Taxonomy" id="9925"/>
    <lineage>
        <taxon>Eukaryota</taxon>
        <taxon>Metazoa</taxon>
        <taxon>Chordata</taxon>
        <taxon>Craniata</taxon>
        <taxon>Vertebrata</taxon>
        <taxon>Euteleostomi</taxon>
        <taxon>Mammalia</taxon>
        <taxon>Eutheria</taxon>
        <taxon>Laurasiatheria</taxon>
        <taxon>Artiodactyla</taxon>
        <taxon>Ruminantia</taxon>
        <taxon>Pecora</taxon>
        <taxon>Bovidae</taxon>
        <taxon>Caprinae</taxon>
        <taxon>Capra</taxon>
    </lineage>
</organism>
<proteinExistence type="inferred from homology"/>
<protein>
    <recommendedName>
        <fullName>Small EDRK-rich factor 2</fullName>
    </recommendedName>
</protein>
<name>SERF2_CAPHI</name>
<keyword id="KW-1185">Reference proteome</keyword>
<evidence type="ECO:0000250" key="1">
    <source>
        <dbReference type="UniProtKB" id="P84101"/>
    </source>
</evidence>
<evidence type="ECO:0000256" key="2">
    <source>
        <dbReference type="SAM" id="MobiDB-lite"/>
    </source>
</evidence>
<evidence type="ECO:0000305" key="3"/>
<feature type="chain" id="PRO_0000357057" description="Small EDRK-rich factor 2">
    <location>
        <begin position="1"/>
        <end position="59"/>
    </location>
</feature>
<feature type="region of interest" description="Disordered" evidence="2">
    <location>
        <begin position="1"/>
        <end position="59"/>
    </location>
</feature>
<feature type="compositionally biased region" description="Basic and acidic residues" evidence="2">
    <location>
        <begin position="1"/>
        <end position="30"/>
    </location>
</feature>
<feature type="compositionally biased region" description="Basic and acidic residues" evidence="2">
    <location>
        <begin position="50"/>
        <end position="59"/>
    </location>
</feature>
<accession>A5JSS4</accession>
<gene>
    <name type="primary">SERF2</name>
</gene>
<dbReference type="EMBL" id="EF564262">
    <property type="protein sequence ID" value="ABQ51189.1"/>
    <property type="molecule type" value="mRNA"/>
</dbReference>
<dbReference type="RefSeq" id="NP_001273891.1">
    <property type="nucleotide sequence ID" value="NM_001286962.1"/>
</dbReference>
<dbReference type="STRING" id="9925.ENSCHIP00000015998"/>
<dbReference type="Ensembl" id="ENSCHIT00000023804.1">
    <property type="protein sequence ID" value="ENSCHIP00000015998.1"/>
    <property type="gene ID" value="ENSCHIG00000016434.1"/>
</dbReference>
<dbReference type="GeneID" id="100860778"/>
<dbReference type="KEGG" id="chx:100860778"/>
<dbReference type="CTD" id="10169"/>
<dbReference type="GeneTree" id="ENSGT00940000164082"/>
<dbReference type="OMA" id="HAKKQTE"/>
<dbReference type="OrthoDB" id="18018at2759"/>
<dbReference type="Proteomes" id="UP000291000">
    <property type="component" value="Chromosome 21"/>
</dbReference>
<dbReference type="Proteomes" id="UP000694566">
    <property type="component" value="Unplaced"/>
</dbReference>
<dbReference type="Bgee" id="ENSCHIG00000016434">
    <property type="expression patterns" value="Expressed in thymus and 17 other cell types or tissues"/>
</dbReference>
<dbReference type="InterPro" id="IPR007513">
    <property type="entry name" value="SERF-like_N"/>
</dbReference>
<dbReference type="InterPro" id="IPR040211">
    <property type="entry name" value="SERF1/2-like"/>
</dbReference>
<dbReference type="PANTHER" id="PTHR13596">
    <property type="entry name" value="SMALL EDRK-RICH FACTOR 1"/>
    <property type="match status" value="1"/>
</dbReference>
<dbReference type="PANTHER" id="PTHR13596:SF2">
    <property type="entry name" value="SMALL EDRK-RICH FACTOR 2"/>
    <property type="match status" value="1"/>
</dbReference>
<dbReference type="Pfam" id="PF04419">
    <property type="entry name" value="SERF-like_N"/>
    <property type="match status" value="1"/>
</dbReference>